<evidence type="ECO:0000255" key="1">
    <source>
        <dbReference type="HAMAP-Rule" id="MF_01082"/>
    </source>
</evidence>
<dbReference type="EC" id="5.4.99.27" evidence="1"/>
<dbReference type="EMBL" id="CP000142">
    <property type="protein sequence ID" value="ABA88019.1"/>
    <property type="molecule type" value="Genomic_DNA"/>
</dbReference>
<dbReference type="RefSeq" id="WP_011340463.1">
    <property type="nucleotide sequence ID" value="NC_007498.2"/>
</dbReference>
<dbReference type="SMR" id="Q3A6I8"/>
<dbReference type="STRING" id="338963.Pcar_0760"/>
<dbReference type="KEGG" id="pca:Pcar_0760"/>
<dbReference type="eggNOG" id="COG0585">
    <property type="taxonomic scope" value="Bacteria"/>
</dbReference>
<dbReference type="HOGENOM" id="CLU_005281_4_0_7"/>
<dbReference type="OrthoDB" id="1550679at2"/>
<dbReference type="Proteomes" id="UP000002534">
    <property type="component" value="Chromosome"/>
</dbReference>
<dbReference type="GO" id="GO:0005829">
    <property type="term" value="C:cytosol"/>
    <property type="evidence" value="ECO:0007669"/>
    <property type="project" value="TreeGrafter"/>
</dbReference>
<dbReference type="GO" id="GO:0003723">
    <property type="term" value="F:RNA binding"/>
    <property type="evidence" value="ECO:0007669"/>
    <property type="project" value="InterPro"/>
</dbReference>
<dbReference type="GO" id="GO:0160150">
    <property type="term" value="F:tRNA pseudouridine(13) synthase activity"/>
    <property type="evidence" value="ECO:0007669"/>
    <property type="project" value="UniProtKB-EC"/>
</dbReference>
<dbReference type="GO" id="GO:0031119">
    <property type="term" value="P:tRNA pseudouridine synthesis"/>
    <property type="evidence" value="ECO:0007669"/>
    <property type="project" value="UniProtKB-UniRule"/>
</dbReference>
<dbReference type="Gene3D" id="1.10.1510.30">
    <property type="match status" value="1"/>
</dbReference>
<dbReference type="Gene3D" id="3.30.70.3160">
    <property type="match status" value="1"/>
</dbReference>
<dbReference type="Gene3D" id="3.30.2350.20">
    <property type="entry name" value="TruD, catalytic domain"/>
    <property type="match status" value="1"/>
</dbReference>
<dbReference type="HAMAP" id="MF_01082">
    <property type="entry name" value="TruD"/>
    <property type="match status" value="1"/>
</dbReference>
<dbReference type="InterPro" id="IPR020103">
    <property type="entry name" value="PsdUridine_synth_cat_dom_sf"/>
</dbReference>
<dbReference type="InterPro" id="IPR001656">
    <property type="entry name" value="PsdUridine_synth_TruD"/>
</dbReference>
<dbReference type="InterPro" id="IPR020119">
    <property type="entry name" value="PsdUridine_synth_TruD_CS"/>
</dbReference>
<dbReference type="InterPro" id="IPR011760">
    <property type="entry name" value="PsdUridine_synth_TruD_insert"/>
</dbReference>
<dbReference type="InterPro" id="IPR042214">
    <property type="entry name" value="TruD_catalytic"/>
</dbReference>
<dbReference type="InterPro" id="IPR050170">
    <property type="entry name" value="TruD_pseudoU_synthase"/>
</dbReference>
<dbReference type="NCBIfam" id="TIGR00094">
    <property type="entry name" value="tRNA_TruD_broad"/>
    <property type="match status" value="1"/>
</dbReference>
<dbReference type="PANTHER" id="PTHR47811">
    <property type="entry name" value="TRNA PSEUDOURIDINE SYNTHASE D"/>
    <property type="match status" value="1"/>
</dbReference>
<dbReference type="PANTHER" id="PTHR47811:SF1">
    <property type="entry name" value="TRNA PSEUDOURIDINE SYNTHASE D"/>
    <property type="match status" value="1"/>
</dbReference>
<dbReference type="Pfam" id="PF01142">
    <property type="entry name" value="TruD"/>
    <property type="match status" value="1"/>
</dbReference>
<dbReference type="PIRSF" id="PIRSF037016">
    <property type="entry name" value="Pseudouridin_synth_euk_prd"/>
    <property type="match status" value="1"/>
</dbReference>
<dbReference type="SUPFAM" id="SSF55120">
    <property type="entry name" value="Pseudouridine synthase"/>
    <property type="match status" value="1"/>
</dbReference>
<dbReference type="PROSITE" id="PS50984">
    <property type="entry name" value="TRUD"/>
    <property type="match status" value="1"/>
</dbReference>
<dbReference type="PROSITE" id="PS01268">
    <property type="entry name" value="UPF0024"/>
    <property type="match status" value="1"/>
</dbReference>
<proteinExistence type="inferred from homology"/>
<feature type="chain" id="PRO_0000230143" description="tRNA pseudouridine synthase D">
    <location>
        <begin position="1"/>
        <end position="398"/>
    </location>
</feature>
<feature type="domain" description="TRUD" evidence="1">
    <location>
        <begin position="151"/>
        <end position="360"/>
    </location>
</feature>
<feature type="active site" description="Nucleophile" evidence="1">
    <location>
        <position position="76"/>
    </location>
</feature>
<name>TRUD_SYNC1</name>
<sequence>MANYLTAKLPGIGGSIKTCPDDFLVEELPLYPTCGEGEHLYLEVEKRGMTTFELLKRLSRALQVNERAMGYAGLKDAQATTRQFISVTDCSAEQALALQLQDIRILSARRHRNKLRLGHLAGNRFTITIRDIDSDALEKARDILHVLQMTGVPNFFGEQRYGALGNSHLIGQAIVQKNFSQAAAHIIGDPDKIIHPEWRQGAILYAENRLEEAEQALPRRMRNERNLVRSLRQGRSAEKAVRRLPGKLLRLYLSAYQSHLFDRLVSMRLESLETLWTGDIAYKHDNGACFLVTDAALEQPRADRFEISPTAPLFGHKVMMAEAQAGILEQALLAKEGITPDDFRLGAGLSMPGERRPLRIPISETASNQQGNELELSFSLPKGSFATTVLHEVMKTDV</sequence>
<protein>
    <recommendedName>
        <fullName evidence="1">tRNA pseudouridine synthase D</fullName>
        <ecNumber evidence="1">5.4.99.27</ecNumber>
    </recommendedName>
    <alternativeName>
        <fullName evidence="1">tRNA pseudouridine(13) synthase</fullName>
    </alternativeName>
    <alternativeName>
        <fullName evidence="1">tRNA pseudouridylate synthase D</fullName>
    </alternativeName>
    <alternativeName>
        <fullName evidence="1">tRNA-uridine isomerase D</fullName>
    </alternativeName>
</protein>
<gene>
    <name evidence="1" type="primary">truD</name>
    <name type="ordered locus">Pcar_0760</name>
</gene>
<organism>
    <name type="scientific">Syntrophotalea carbinolica (strain DSM 2380 / NBRC 103641 / GraBd1)</name>
    <name type="common">Pelobacter carbinolicus</name>
    <dbReference type="NCBI Taxonomy" id="338963"/>
    <lineage>
        <taxon>Bacteria</taxon>
        <taxon>Pseudomonadati</taxon>
        <taxon>Thermodesulfobacteriota</taxon>
        <taxon>Desulfuromonadia</taxon>
        <taxon>Desulfuromonadales</taxon>
        <taxon>Syntrophotaleaceae</taxon>
        <taxon>Syntrophotalea</taxon>
    </lineage>
</organism>
<keyword id="KW-0413">Isomerase</keyword>
<keyword id="KW-1185">Reference proteome</keyword>
<keyword id="KW-0819">tRNA processing</keyword>
<comment type="function">
    <text evidence="1">Responsible for synthesis of pseudouridine from uracil-13 in transfer RNAs.</text>
</comment>
<comment type="catalytic activity">
    <reaction evidence="1">
        <text>uridine(13) in tRNA = pseudouridine(13) in tRNA</text>
        <dbReference type="Rhea" id="RHEA:42540"/>
        <dbReference type="Rhea" id="RHEA-COMP:10105"/>
        <dbReference type="Rhea" id="RHEA-COMP:10106"/>
        <dbReference type="ChEBI" id="CHEBI:65314"/>
        <dbReference type="ChEBI" id="CHEBI:65315"/>
        <dbReference type="EC" id="5.4.99.27"/>
    </reaction>
</comment>
<comment type="similarity">
    <text evidence="1">Belongs to the pseudouridine synthase TruD family.</text>
</comment>
<reference key="1">
    <citation type="submission" date="2005-10" db="EMBL/GenBank/DDBJ databases">
        <title>Complete sequence of Pelobacter carbinolicus DSM 2380.</title>
        <authorList>
            <person name="Copeland A."/>
            <person name="Lucas S."/>
            <person name="Lapidus A."/>
            <person name="Barry K."/>
            <person name="Detter J.C."/>
            <person name="Glavina T."/>
            <person name="Hammon N."/>
            <person name="Israni S."/>
            <person name="Pitluck S."/>
            <person name="Chertkov O."/>
            <person name="Schmutz J."/>
            <person name="Larimer F."/>
            <person name="Land M."/>
            <person name="Kyrpides N."/>
            <person name="Ivanova N."/>
            <person name="Richardson P."/>
        </authorList>
    </citation>
    <scope>NUCLEOTIDE SEQUENCE [LARGE SCALE GENOMIC DNA]</scope>
    <source>
        <strain>DSM 2380 / NBRC 103641 / GraBd1</strain>
    </source>
</reference>
<accession>Q3A6I8</accession>